<name>XPT_MOOTA</name>
<evidence type="ECO:0000255" key="1">
    <source>
        <dbReference type="HAMAP-Rule" id="MF_01184"/>
    </source>
</evidence>
<protein>
    <recommendedName>
        <fullName evidence="1">Xanthine phosphoribosyltransferase</fullName>
        <shortName evidence="1">XPRTase</shortName>
        <ecNumber evidence="1">2.4.2.22</ecNumber>
    </recommendedName>
</protein>
<comment type="function">
    <text evidence="1">Converts the preformed base xanthine, a product of nucleic acid breakdown, to xanthosine 5'-monophosphate (XMP), so it can be reused for RNA or DNA synthesis.</text>
</comment>
<comment type="catalytic activity">
    <reaction evidence="1">
        <text>XMP + diphosphate = xanthine + 5-phospho-alpha-D-ribose 1-diphosphate</text>
        <dbReference type="Rhea" id="RHEA:10800"/>
        <dbReference type="ChEBI" id="CHEBI:17712"/>
        <dbReference type="ChEBI" id="CHEBI:33019"/>
        <dbReference type="ChEBI" id="CHEBI:57464"/>
        <dbReference type="ChEBI" id="CHEBI:58017"/>
        <dbReference type="EC" id="2.4.2.22"/>
    </reaction>
</comment>
<comment type="pathway">
    <text evidence="1">Purine metabolism; XMP biosynthesis via salvage pathway; XMP from xanthine: step 1/1.</text>
</comment>
<comment type="subunit">
    <text evidence="1">Homodimer.</text>
</comment>
<comment type="subcellular location">
    <subcellularLocation>
        <location evidence="1">Cytoplasm</location>
    </subcellularLocation>
</comment>
<comment type="similarity">
    <text evidence="1">Belongs to the purine/pyrimidine phosphoribosyltransferase family. Xpt subfamily.</text>
</comment>
<sequence length="196" mass="21002">MVALSVVELLKEKIRQEGRVISDDVLKVDSFLNHQIDPVLMLKVGEEFARRFAGSAITKVLTVEASGIAVALMTGLSLKVPVVFAKKKQPSTMDGETYCGRVRSFTKEEVIDIVVAGSYLGPEDRVLIIDDFLASGEAARGLLKIITQAGATLVGVGTVIEKVFQTGGEALRDQGIRVESLVQIGSLAGGQIEFLN</sequence>
<gene>
    <name evidence="1" type="primary">xpt</name>
    <name type="ordered locus">Moth_0720</name>
</gene>
<accession>Q2RKK1</accession>
<keyword id="KW-0963">Cytoplasm</keyword>
<keyword id="KW-0328">Glycosyltransferase</keyword>
<keyword id="KW-0660">Purine salvage</keyword>
<keyword id="KW-0808">Transferase</keyword>
<organism>
    <name type="scientific">Moorella thermoacetica (strain ATCC 39073 / JCM 9320)</name>
    <dbReference type="NCBI Taxonomy" id="264732"/>
    <lineage>
        <taxon>Bacteria</taxon>
        <taxon>Bacillati</taxon>
        <taxon>Bacillota</taxon>
        <taxon>Clostridia</taxon>
        <taxon>Moorellales</taxon>
        <taxon>Moorellaceae</taxon>
        <taxon>Moorella</taxon>
    </lineage>
</organism>
<proteinExistence type="inferred from homology"/>
<feature type="chain" id="PRO_0000339721" description="Xanthine phosphoribosyltransferase">
    <location>
        <begin position="1"/>
        <end position="196"/>
    </location>
</feature>
<feature type="binding site" evidence="1">
    <location>
        <position position="26"/>
    </location>
    <ligand>
        <name>xanthine</name>
        <dbReference type="ChEBI" id="CHEBI:17712"/>
    </ligand>
</feature>
<feature type="binding site" evidence="1">
    <location>
        <position position="33"/>
    </location>
    <ligand>
        <name>xanthine</name>
        <dbReference type="ChEBI" id="CHEBI:17712"/>
    </ligand>
</feature>
<feature type="binding site" evidence="1">
    <location>
        <begin position="134"/>
        <end position="138"/>
    </location>
    <ligand>
        <name>5-phospho-alpha-D-ribose 1-diphosphate</name>
        <dbReference type="ChEBI" id="CHEBI:58017"/>
    </ligand>
</feature>
<feature type="binding site" evidence="1">
    <location>
        <position position="162"/>
    </location>
    <ligand>
        <name>xanthine</name>
        <dbReference type="ChEBI" id="CHEBI:17712"/>
    </ligand>
</feature>
<reference key="1">
    <citation type="journal article" date="2008" name="Environ. Microbiol.">
        <title>The complete genome sequence of Moorella thermoacetica (f. Clostridium thermoaceticum).</title>
        <authorList>
            <person name="Pierce E."/>
            <person name="Xie G."/>
            <person name="Barabote R.D."/>
            <person name="Saunders E."/>
            <person name="Han C.S."/>
            <person name="Detter J.C."/>
            <person name="Richardson P."/>
            <person name="Brettin T.S."/>
            <person name="Das A."/>
            <person name="Ljungdahl L.G."/>
            <person name="Ragsdale S.W."/>
        </authorList>
    </citation>
    <scope>NUCLEOTIDE SEQUENCE [LARGE SCALE GENOMIC DNA]</scope>
    <source>
        <strain>ATCC 39073 / JCM 9320</strain>
    </source>
</reference>
<dbReference type="EC" id="2.4.2.22" evidence="1"/>
<dbReference type="EMBL" id="CP000232">
    <property type="protein sequence ID" value="ABC19038.1"/>
    <property type="molecule type" value="Genomic_DNA"/>
</dbReference>
<dbReference type="RefSeq" id="YP_429581.1">
    <property type="nucleotide sequence ID" value="NC_007644.1"/>
</dbReference>
<dbReference type="SMR" id="Q2RKK1"/>
<dbReference type="STRING" id="264732.Moth_0720"/>
<dbReference type="EnsemblBacteria" id="ABC19038">
    <property type="protein sequence ID" value="ABC19038"/>
    <property type="gene ID" value="Moth_0720"/>
</dbReference>
<dbReference type="KEGG" id="mta:Moth_0720"/>
<dbReference type="PATRIC" id="fig|264732.11.peg.772"/>
<dbReference type="eggNOG" id="COG0503">
    <property type="taxonomic scope" value="Bacteria"/>
</dbReference>
<dbReference type="HOGENOM" id="CLU_099015_0_0_9"/>
<dbReference type="OrthoDB" id="9790678at2"/>
<dbReference type="UniPathway" id="UPA00602">
    <property type="reaction ID" value="UER00658"/>
</dbReference>
<dbReference type="GO" id="GO:0005737">
    <property type="term" value="C:cytoplasm"/>
    <property type="evidence" value="ECO:0007669"/>
    <property type="project" value="UniProtKB-SubCell"/>
</dbReference>
<dbReference type="GO" id="GO:0000310">
    <property type="term" value="F:xanthine phosphoribosyltransferase activity"/>
    <property type="evidence" value="ECO:0007669"/>
    <property type="project" value="UniProtKB-UniRule"/>
</dbReference>
<dbReference type="GO" id="GO:0006166">
    <property type="term" value="P:purine ribonucleoside salvage"/>
    <property type="evidence" value="ECO:0007669"/>
    <property type="project" value="UniProtKB-KW"/>
</dbReference>
<dbReference type="GO" id="GO:0046110">
    <property type="term" value="P:xanthine metabolic process"/>
    <property type="evidence" value="ECO:0007669"/>
    <property type="project" value="InterPro"/>
</dbReference>
<dbReference type="GO" id="GO:0032265">
    <property type="term" value="P:XMP salvage"/>
    <property type="evidence" value="ECO:0007669"/>
    <property type="project" value="UniProtKB-UniRule"/>
</dbReference>
<dbReference type="CDD" id="cd06223">
    <property type="entry name" value="PRTases_typeI"/>
    <property type="match status" value="1"/>
</dbReference>
<dbReference type="Gene3D" id="3.40.50.2020">
    <property type="match status" value="1"/>
</dbReference>
<dbReference type="HAMAP" id="MF_01184">
    <property type="entry name" value="XPRTase"/>
    <property type="match status" value="1"/>
</dbReference>
<dbReference type="InterPro" id="IPR000836">
    <property type="entry name" value="PRibTrfase_dom"/>
</dbReference>
<dbReference type="InterPro" id="IPR029057">
    <property type="entry name" value="PRTase-like"/>
</dbReference>
<dbReference type="InterPro" id="IPR050118">
    <property type="entry name" value="Pur/Pyrimidine_PRTase"/>
</dbReference>
<dbReference type="InterPro" id="IPR010079">
    <property type="entry name" value="Xanthine_PRibTrfase"/>
</dbReference>
<dbReference type="NCBIfam" id="NF006671">
    <property type="entry name" value="PRK09219.1"/>
    <property type="match status" value="1"/>
</dbReference>
<dbReference type="NCBIfam" id="TIGR01744">
    <property type="entry name" value="XPRTase"/>
    <property type="match status" value="1"/>
</dbReference>
<dbReference type="PANTHER" id="PTHR43864">
    <property type="entry name" value="HYPOXANTHINE/GUANINE PHOSPHORIBOSYLTRANSFERASE"/>
    <property type="match status" value="1"/>
</dbReference>
<dbReference type="PANTHER" id="PTHR43864:SF1">
    <property type="entry name" value="XANTHINE PHOSPHORIBOSYLTRANSFERASE"/>
    <property type="match status" value="1"/>
</dbReference>
<dbReference type="SUPFAM" id="SSF53271">
    <property type="entry name" value="PRTase-like"/>
    <property type="match status" value="1"/>
</dbReference>